<name>RIX7_YEAST</name>
<evidence type="ECO:0000255" key="1"/>
<evidence type="ECO:0000256" key="2">
    <source>
        <dbReference type="SAM" id="MobiDB-lite"/>
    </source>
</evidence>
<evidence type="ECO:0000269" key="3">
    <source>
    </source>
</evidence>
<evidence type="ECO:0000269" key="4">
    <source>
    </source>
</evidence>
<evidence type="ECO:0000305" key="5"/>
<evidence type="ECO:0007744" key="6">
    <source>
    </source>
</evidence>
<sequence>MVKVKSKKNSLTSSLDNKIVDLIYRLLEEKTLDRKRSLRQESQGEEGENNEGEEDEDIFESMFFAKDLTAGEIFTFCLTKDLSLQRVKKVVLQKTIDRMLKDVIESELEEFGSYPGYNNEEEEKPSLEEELAKKNMMIERDTNEMNKRITSTWSKSGSVSESITETDDPKTEEVKKSKKRSKEGTCKVKRQKIKEDRSPPNSSLKSLGGMDDVVAQLMELIGLPILHPEIFLSTGVEPPRGVLLHGPPGCGKTSIANALAGELQVPFISISAPSVVSGMSGESEKKIRDLFDEARSLAPCLVFFDEIDAITPKRDGGAQREMERRIVAQLLTSMDELTMEKTNGKPVIIIGATNRPDSLDAALRRAGRFDREICLNVPNEVSRLHILKKMSDNLKIDGAIDFAKLAKLTPGFVGADLKALVTAAGTCAIKRIFQTYANIKSTPTTATDSSEDNMEIDETANGDESSLKNTANMIDPLPLSVVQQFIRNYPEPLSGEQLSLLSIKYEDFLKALPTIQPTAKREGFATVPDVTWANVGALQRVRLELNMAIVQPIKRPELYEKVGISAPGGVLLWGPPGCGKTLLAKAVANESRANFISIKGPELLNKYVGESERSIRQVFTRARASVPCVIFFDELDALVPRRDTSLSESSSRVVNTLLTELDGLNDRRGIFVIGATNRPDMIDPAMLRPGRLDKSLFIELPNTEEKLDIIKTLTKSHGTPLSSDVDFEEIIRNEKCNNFSGADLAALVRESSVLALKRKFFQSEEIQSVLDNDLDKEFEDLSVGVSGEEIIVTMSDFRSALRKIKPSVSDKDRLKYDRLNKKMGLTEEMKDAEEMKQ</sequence>
<organism>
    <name type="scientific">Saccharomyces cerevisiae (strain ATCC 204508 / S288c)</name>
    <name type="common">Baker's yeast</name>
    <dbReference type="NCBI Taxonomy" id="559292"/>
    <lineage>
        <taxon>Eukaryota</taxon>
        <taxon>Fungi</taxon>
        <taxon>Dikarya</taxon>
        <taxon>Ascomycota</taxon>
        <taxon>Saccharomycotina</taxon>
        <taxon>Saccharomycetes</taxon>
        <taxon>Saccharomycetales</taxon>
        <taxon>Saccharomycetaceae</taxon>
        <taxon>Saccharomyces</taxon>
    </lineage>
</organism>
<dbReference type="EMBL" id="Z73139">
    <property type="protein sequence ID" value="CAA97483.1"/>
    <property type="molecule type" value="Genomic_DNA"/>
</dbReference>
<dbReference type="EMBL" id="BK006945">
    <property type="protein sequence ID" value="DAA09287.1"/>
    <property type="molecule type" value="Genomic_DNA"/>
</dbReference>
<dbReference type="PIR" id="S64785">
    <property type="entry name" value="S64785"/>
</dbReference>
<dbReference type="RefSeq" id="NP_013066.1">
    <property type="nucleotide sequence ID" value="NM_001181854.1"/>
</dbReference>
<dbReference type="SMR" id="Q07844"/>
<dbReference type="BioGRID" id="31219">
    <property type="interactions" value="118"/>
</dbReference>
<dbReference type="DIP" id="DIP-6385N"/>
<dbReference type="FunCoup" id="Q07844">
    <property type="interactions" value="1199"/>
</dbReference>
<dbReference type="IntAct" id="Q07844">
    <property type="interactions" value="79"/>
</dbReference>
<dbReference type="MINT" id="Q07844"/>
<dbReference type="STRING" id="4932.YLL034C"/>
<dbReference type="iPTMnet" id="Q07844"/>
<dbReference type="PaxDb" id="4932-YLL034C"/>
<dbReference type="PeptideAtlas" id="Q07844"/>
<dbReference type="EnsemblFungi" id="YLL034C_mRNA">
    <property type="protein sequence ID" value="YLL034C"/>
    <property type="gene ID" value="YLL034C"/>
</dbReference>
<dbReference type="GeneID" id="850625"/>
<dbReference type="KEGG" id="sce:YLL034C"/>
<dbReference type="AGR" id="SGD:S000003957"/>
<dbReference type="SGD" id="S000003957">
    <property type="gene designation" value="RIX7"/>
</dbReference>
<dbReference type="VEuPathDB" id="FungiDB:YLL034C"/>
<dbReference type="eggNOG" id="KOG0733">
    <property type="taxonomic scope" value="Eukaryota"/>
</dbReference>
<dbReference type="GeneTree" id="ENSGT00570000079239"/>
<dbReference type="HOGENOM" id="CLU_000688_8_2_1"/>
<dbReference type="InParanoid" id="Q07844"/>
<dbReference type="OMA" id="GLWSTHR"/>
<dbReference type="OrthoDB" id="27435at2759"/>
<dbReference type="BioCyc" id="YEAST:G3O-32137-MONOMER"/>
<dbReference type="BioGRID-ORCS" id="850625">
    <property type="hits" value="3 hits in 10 CRISPR screens"/>
</dbReference>
<dbReference type="CD-CODE" id="BDAE0F88">
    <property type="entry name" value="Nucleolus"/>
</dbReference>
<dbReference type="PRO" id="PR:Q07844"/>
<dbReference type="Proteomes" id="UP000002311">
    <property type="component" value="Chromosome XII"/>
</dbReference>
<dbReference type="RNAct" id="Q07844">
    <property type="molecule type" value="protein"/>
</dbReference>
<dbReference type="GO" id="GO:0005730">
    <property type="term" value="C:nucleolus"/>
    <property type="evidence" value="ECO:0000314"/>
    <property type="project" value="SGD"/>
</dbReference>
<dbReference type="GO" id="GO:0005634">
    <property type="term" value="C:nucleus"/>
    <property type="evidence" value="ECO:0000314"/>
    <property type="project" value="SGD"/>
</dbReference>
<dbReference type="GO" id="GO:0030687">
    <property type="term" value="C:preribosome, large subunit precursor"/>
    <property type="evidence" value="ECO:0000314"/>
    <property type="project" value="SGD"/>
</dbReference>
<dbReference type="GO" id="GO:0005524">
    <property type="term" value="F:ATP binding"/>
    <property type="evidence" value="ECO:0007669"/>
    <property type="project" value="UniProtKB-KW"/>
</dbReference>
<dbReference type="GO" id="GO:0016887">
    <property type="term" value="F:ATP hydrolysis activity"/>
    <property type="evidence" value="ECO:0000318"/>
    <property type="project" value="GO_Central"/>
</dbReference>
<dbReference type="GO" id="GO:1990275">
    <property type="term" value="F:preribosome binding"/>
    <property type="evidence" value="ECO:0000318"/>
    <property type="project" value="GO_Central"/>
</dbReference>
<dbReference type="GO" id="GO:0042273">
    <property type="term" value="P:ribosomal large subunit biogenesis"/>
    <property type="evidence" value="ECO:0000315"/>
    <property type="project" value="SGD"/>
</dbReference>
<dbReference type="GO" id="GO:0000055">
    <property type="term" value="P:ribosomal large subunit export from nucleus"/>
    <property type="evidence" value="ECO:0000315"/>
    <property type="project" value="SGD"/>
</dbReference>
<dbReference type="GO" id="GO:0042254">
    <property type="term" value="P:ribosome biogenesis"/>
    <property type="evidence" value="ECO:0000318"/>
    <property type="project" value="GO_Central"/>
</dbReference>
<dbReference type="CDD" id="cd19518">
    <property type="entry name" value="RecA-like_NVL_r1-like"/>
    <property type="match status" value="1"/>
</dbReference>
<dbReference type="CDD" id="cd19530">
    <property type="entry name" value="RecA-like_NVL_r2-like"/>
    <property type="match status" value="1"/>
</dbReference>
<dbReference type="FunFam" id="3.40.50.300:FF:000018">
    <property type="entry name" value="Cell division control 48"/>
    <property type="match status" value="1"/>
</dbReference>
<dbReference type="FunFam" id="1.10.8.60:FF:000110">
    <property type="entry name" value="Ribosome biogenesis ATPase RIX7"/>
    <property type="match status" value="1"/>
</dbReference>
<dbReference type="FunFam" id="1.10.8.60:FF:000156">
    <property type="entry name" value="Ribosome biogenesis ATPase RIX7"/>
    <property type="match status" value="1"/>
</dbReference>
<dbReference type="FunFam" id="3.40.50.300:FF:000365">
    <property type="entry name" value="Ribosome biogenesis ATPase RIX7"/>
    <property type="match status" value="1"/>
</dbReference>
<dbReference type="Gene3D" id="1.10.8.60">
    <property type="match status" value="2"/>
</dbReference>
<dbReference type="Gene3D" id="3.40.50.300">
    <property type="entry name" value="P-loop containing nucleotide triphosphate hydrolases"/>
    <property type="match status" value="2"/>
</dbReference>
<dbReference type="InterPro" id="IPR003593">
    <property type="entry name" value="AAA+_ATPase"/>
</dbReference>
<dbReference type="InterPro" id="IPR050168">
    <property type="entry name" value="AAA_ATPase_domain"/>
</dbReference>
<dbReference type="InterPro" id="IPR041569">
    <property type="entry name" value="AAA_lid_3"/>
</dbReference>
<dbReference type="InterPro" id="IPR003959">
    <property type="entry name" value="ATPase_AAA_core"/>
</dbReference>
<dbReference type="InterPro" id="IPR003960">
    <property type="entry name" value="ATPase_AAA_CS"/>
</dbReference>
<dbReference type="InterPro" id="IPR027417">
    <property type="entry name" value="P-loop_NTPase"/>
</dbReference>
<dbReference type="PANTHER" id="PTHR23077">
    <property type="entry name" value="AAA-FAMILY ATPASE"/>
    <property type="match status" value="1"/>
</dbReference>
<dbReference type="PANTHER" id="PTHR23077:SF171">
    <property type="entry name" value="NUCLEAR VALOSIN-CONTAINING PROTEIN-LIKE"/>
    <property type="match status" value="1"/>
</dbReference>
<dbReference type="Pfam" id="PF00004">
    <property type="entry name" value="AAA"/>
    <property type="match status" value="2"/>
</dbReference>
<dbReference type="Pfam" id="PF17862">
    <property type="entry name" value="AAA_lid_3"/>
    <property type="match status" value="2"/>
</dbReference>
<dbReference type="SMART" id="SM00382">
    <property type="entry name" value="AAA"/>
    <property type="match status" value="2"/>
</dbReference>
<dbReference type="SUPFAM" id="SSF52540">
    <property type="entry name" value="P-loop containing nucleoside triphosphate hydrolases"/>
    <property type="match status" value="2"/>
</dbReference>
<dbReference type="PROSITE" id="PS00674">
    <property type="entry name" value="AAA"/>
    <property type="match status" value="1"/>
</dbReference>
<gene>
    <name type="primary">RIX7</name>
    <name type="ordered locus">YLL034C</name>
</gene>
<proteinExistence type="evidence at protein level"/>
<comment type="function">
    <text evidence="3">Involved in ribosome biogenesis. Seems to be required for restructuring nucleoplasmic 60S pre-ribosomal particles to make them competent for nuclear export.</text>
</comment>
<comment type="subcellular location">
    <subcellularLocation>
        <location evidence="3">Nucleus</location>
        <location evidence="3">Nucleolus</location>
    </subcellularLocation>
</comment>
<comment type="miscellaneous">
    <text evidence="4">Present with 4490 molecules/cell in log phase SD medium.</text>
</comment>
<comment type="similarity">
    <text evidence="5">Belongs to the AAA ATPase family.</text>
</comment>
<reference key="1">
    <citation type="journal article" date="1997" name="Nature">
        <title>The nucleotide sequence of Saccharomyces cerevisiae chromosome XII.</title>
        <authorList>
            <person name="Johnston M."/>
            <person name="Hillier L.W."/>
            <person name="Riles L."/>
            <person name="Albermann K."/>
            <person name="Andre B."/>
            <person name="Ansorge W."/>
            <person name="Benes V."/>
            <person name="Brueckner M."/>
            <person name="Delius H."/>
            <person name="Dubois E."/>
            <person name="Duesterhoeft A."/>
            <person name="Entian K.-D."/>
            <person name="Floeth M."/>
            <person name="Goffeau A."/>
            <person name="Hebling U."/>
            <person name="Heumann K."/>
            <person name="Heuss-Neitzel D."/>
            <person name="Hilbert H."/>
            <person name="Hilger F."/>
            <person name="Kleine K."/>
            <person name="Koetter P."/>
            <person name="Louis E.J."/>
            <person name="Messenguy F."/>
            <person name="Mewes H.-W."/>
            <person name="Miosga T."/>
            <person name="Moestl D."/>
            <person name="Mueller-Auer S."/>
            <person name="Nentwich U."/>
            <person name="Obermaier B."/>
            <person name="Piravandi E."/>
            <person name="Pohl T.M."/>
            <person name="Portetelle D."/>
            <person name="Purnelle B."/>
            <person name="Rechmann S."/>
            <person name="Rieger M."/>
            <person name="Rinke M."/>
            <person name="Rose M."/>
            <person name="Scharfe M."/>
            <person name="Scherens B."/>
            <person name="Scholler P."/>
            <person name="Schwager C."/>
            <person name="Schwarz S."/>
            <person name="Underwood A.P."/>
            <person name="Urrestarazu L.A."/>
            <person name="Vandenbol M."/>
            <person name="Verhasselt P."/>
            <person name="Vierendeels F."/>
            <person name="Voet M."/>
            <person name="Volckaert G."/>
            <person name="Voss H."/>
            <person name="Wambutt R."/>
            <person name="Wedler E."/>
            <person name="Wedler H."/>
            <person name="Zimmermann F.K."/>
            <person name="Zollner A."/>
            <person name="Hani J."/>
            <person name="Hoheisel J.D."/>
        </authorList>
    </citation>
    <scope>NUCLEOTIDE SEQUENCE [LARGE SCALE GENOMIC DNA]</scope>
    <source>
        <strain>ATCC 204508 / S288c</strain>
    </source>
</reference>
<reference key="2">
    <citation type="journal article" date="2014" name="G3 (Bethesda)">
        <title>The reference genome sequence of Saccharomyces cerevisiae: Then and now.</title>
        <authorList>
            <person name="Engel S.R."/>
            <person name="Dietrich F.S."/>
            <person name="Fisk D.G."/>
            <person name="Binkley G."/>
            <person name="Balakrishnan R."/>
            <person name="Costanzo M.C."/>
            <person name="Dwight S.S."/>
            <person name="Hitz B.C."/>
            <person name="Karra K."/>
            <person name="Nash R.S."/>
            <person name="Weng S."/>
            <person name="Wong E.D."/>
            <person name="Lloyd P."/>
            <person name="Skrzypek M.S."/>
            <person name="Miyasato S.R."/>
            <person name="Simison M."/>
            <person name="Cherry J.M."/>
        </authorList>
    </citation>
    <scope>GENOME REANNOTATION</scope>
    <source>
        <strain>ATCC 204508 / S288c</strain>
    </source>
</reference>
<reference key="3">
    <citation type="journal article" date="2001" name="EMBO J.">
        <title>A nuclear AAA-type ATPase (Rix7p) is required for biogenesis and nuclear export of 60S ribosomal subunits.</title>
        <authorList>
            <person name="Gadal O."/>
            <person name="Strauss D."/>
            <person name="Braspenning J."/>
            <person name="Hoepfner D."/>
            <person name="Petfalski E."/>
            <person name="Philippsen P."/>
            <person name="Tollervey D."/>
            <person name="Hurt E."/>
        </authorList>
    </citation>
    <scope>FUNCTION</scope>
    <scope>SUBCELLULAR LOCATION</scope>
</reference>
<reference key="4">
    <citation type="journal article" date="2003" name="Mol. Cell">
        <title>Assigning function to yeast proteins by integration of technologies.</title>
        <authorList>
            <person name="Hazbun T.R."/>
            <person name="Malmstroem L."/>
            <person name="Anderson S."/>
            <person name="Graczyk B.J."/>
            <person name="Fox B."/>
            <person name="Riffle M."/>
            <person name="Sundin B.A."/>
            <person name="Aranda J.D."/>
            <person name="McDonald W.H."/>
            <person name="Chiu C.-H."/>
            <person name="Snydsman B.E."/>
            <person name="Bradley P."/>
            <person name="Muller E.G.D."/>
            <person name="Fields S."/>
            <person name="Baker D."/>
            <person name="Yates J.R. III"/>
            <person name="Davis T.N."/>
        </authorList>
    </citation>
    <scope>IDENTIFICATION BY MASS SPECTROMETRY</scope>
</reference>
<reference key="5">
    <citation type="journal article" date="2003" name="Nature">
        <title>Global analysis of protein expression in yeast.</title>
        <authorList>
            <person name="Ghaemmaghami S."/>
            <person name="Huh W.-K."/>
            <person name="Bower K."/>
            <person name="Howson R.W."/>
            <person name="Belle A."/>
            <person name="Dephoure N."/>
            <person name="O'Shea E.K."/>
            <person name="Weissman J.S."/>
        </authorList>
    </citation>
    <scope>LEVEL OF PROTEIN EXPRESSION [LARGE SCALE ANALYSIS]</scope>
</reference>
<reference key="6">
    <citation type="journal article" date="2007" name="J. Proteome Res.">
        <title>Large-scale phosphorylation analysis of alpha-factor-arrested Saccharomyces cerevisiae.</title>
        <authorList>
            <person name="Li X."/>
            <person name="Gerber S.A."/>
            <person name="Rudner A.D."/>
            <person name="Beausoleil S.A."/>
            <person name="Haas W."/>
            <person name="Villen J."/>
            <person name="Elias J.E."/>
            <person name="Gygi S.P."/>
        </authorList>
    </citation>
    <scope>IDENTIFICATION BY MASS SPECTROMETRY [LARGE SCALE ANALYSIS]</scope>
    <source>
        <strain>ADR376</strain>
    </source>
</reference>
<reference key="7">
    <citation type="journal article" date="2009" name="Science">
        <title>Global analysis of Cdk1 substrate phosphorylation sites provides insights into evolution.</title>
        <authorList>
            <person name="Holt L.J."/>
            <person name="Tuch B.B."/>
            <person name="Villen J."/>
            <person name="Johnson A.D."/>
            <person name="Gygi S.P."/>
            <person name="Morgan D.O."/>
        </authorList>
    </citation>
    <scope>PHOSPHORYLATION [LARGE SCALE ANALYSIS] AT SER-42</scope>
    <scope>IDENTIFICATION BY MASS SPECTROMETRY [LARGE SCALE ANALYSIS]</scope>
</reference>
<feature type="chain" id="PRO_0000084762" description="Ribosome biogenesis ATPase RIX7">
    <location>
        <begin position="1"/>
        <end position="837"/>
    </location>
</feature>
<feature type="region of interest" description="Disordered" evidence="2">
    <location>
        <begin position="36"/>
        <end position="56"/>
    </location>
</feature>
<feature type="region of interest" description="Disordered" evidence="2">
    <location>
        <begin position="149"/>
        <end position="207"/>
    </location>
</feature>
<feature type="region of interest" description="Disordered" evidence="2">
    <location>
        <begin position="443"/>
        <end position="468"/>
    </location>
</feature>
<feature type="compositionally biased region" description="Acidic residues" evidence="2">
    <location>
        <begin position="43"/>
        <end position="56"/>
    </location>
</feature>
<feature type="compositionally biased region" description="Polar residues" evidence="2">
    <location>
        <begin position="149"/>
        <end position="163"/>
    </location>
</feature>
<feature type="compositionally biased region" description="Basic residues" evidence="2">
    <location>
        <begin position="176"/>
        <end position="192"/>
    </location>
</feature>
<feature type="compositionally biased region" description="Acidic residues" evidence="2">
    <location>
        <begin position="449"/>
        <end position="461"/>
    </location>
</feature>
<feature type="binding site" evidence="1">
    <location>
        <begin position="246"/>
        <end position="253"/>
    </location>
    <ligand>
        <name>ATP</name>
        <dbReference type="ChEBI" id="CHEBI:30616"/>
    </ligand>
</feature>
<feature type="binding site" evidence="1">
    <location>
        <begin position="574"/>
        <end position="581"/>
    </location>
    <ligand>
        <name>ATP</name>
        <dbReference type="ChEBI" id="CHEBI:30616"/>
    </ligand>
</feature>
<feature type="modified residue" description="Phosphoserine" evidence="6">
    <location>
        <position position="42"/>
    </location>
</feature>
<accession>Q07844</accession>
<accession>D6VXX1</accession>
<keyword id="KW-0067">ATP-binding</keyword>
<keyword id="KW-0547">Nucleotide-binding</keyword>
<keyword id="KW-0539">Nucleus</keyword>
<keyword id="KW-0597">Phosphoprotein</keyword>
<keyword id="KW-1185">Reference proteome</keyword>
<keyword id="KW-0677">Repeat</keyword>
<keyword id="KW-0690">Ribosome biogenesis</keyword>
<protein>
    <recommendedName>
        <fullName>Ribosome biogenesis ATPase RIX7</fullName>
    </recommendedName>
</protein>